<name>PLSB_ECO8A</name>
<feature type="chain" id="PRO_1000123078" description="Glycerol-3-phosphate acyltransferase">
    <location>
        <begin position="1"/>
        <end position="807"/>
    </location>
</feature>
<feature type="short sequence motif" description="HXXXXD motif">
    <location>
        <begin position="305"/>
        <end position="310"/>
    </location>
</feature>
<comment type="catalytic activity">
    <reaction evidence="1">
        <text>sn-glycerol 3-phosphate + an acyl-CoA = a 1-acyl-sn-glycero-3-phosphate + CoA</text>
        <dbReference type="Rhea" id="RHEA:15325"/>
        <dbReference type="ChEBI" id="CHEBI:57287"/>
        <dbReference type="ChEBI" id="CHEBI:57597"/>
        <dbReference type="ChEBI" id="CHEBI:57970"/>
        <dbReference type="ChEBI" id="CHEBI:58342"/>
        <dbReference type="EC" id="2.3.1.15"/>
    </reaction>
</comment>
<comment type="pathway">
    <text evidence="1">Phospholipid metabolism; CDP-diacylglycerol biosynthesis; CDP-diacylglycerol from sn-glycerol 3-phosphate: step 1/3.</text>
</comment>
<comment type="subcellular location">
    <subcellularLocation>
        <location evidence="1">Cell inner membrane</location>
        <topology evidence="1">Peripheral membrane protein</topology>
        <orientation evidence="1">Cytoplasmic side</orientation>
    </subcellularLocation>
</comment>
<comment type="domain">
    <text evidence="1">The HXXXXD motif is essential for acyltransferase activity and may constitute the binding site for the phosphate moiety of the glycerol-3-phosphate.</text>
</comment>
<comment type="similarity">
    <text evidence="1">Belongs to the GPAT/DAPAT family.</text>
</comment>
<organism>
    <name type="scientific">Escherichia coli O8 (strain IAI1)</name>
    <dbReference type="NCBI Taxonomy" id="585034"/>
    <lineage>
        <taxon>Bacteria</taxon>
        <taxon>Pseudomonadati</taxon>
        <taxon>Pseudomonadota</taxon>
        <taxon>Gammaproteobacteria</taxon>
        <taxon>Enterobacterales</taxon>
        <taxon>Enterobacteriaceae</taxon>
        <taxon>Escherichia</taxon>
    </lineage>
</organism>
<dbReference type="EC" id="2.3.1.15" evidence="1"/>
<dbReference type="EMBL" id="CU928160">
    <property type="protein sequence ID" value="CAR01020.1"/>
    <property type="molecule type" value="Genomic_DNA"/>
</dbReference>
<dbReference type="RefSeq" id="WP_000017354.1">
    <property type="nucleotide sequence ID" value="NC_011741.1"/>
</dbReference>
<dbReference type="SMR" id="B7M7V4"/>
<dbReference type="GeneID" id="75204185"/>
<dbReference type="KEGG" id="ecr:ECIAI1_4271"/>
<dbReference type="HOGENOM" id="CLU_015407_0_0_6"/>
<dbReference type="UniPathway" id="UPA00557">
    <property type="reaction ID" value="UER00612"/>
</dbReference>
<dbReference type="GO" id="GO:0005886">
    <property type="term" value="C:plasma membrane"/>
    <property type="evidence" value="ECO:0007669"/>
    <property type="project" value="UniProtKB-SubCell"/>
</dbReference>
<dbReference type="GO" id="GO:0004366">
    <property type="term" value="F:glycerol-3-phosphate O-acyltransferase activity"/>
    <property type="evidence" value="ECO:0007669"/>
    <property type="project" value="UniProtKB-UniRule"/>
</dbReference>
<dbReference type="GO" id="GO:0016024">
    <property type="term" value="P:CDP-diacylglycerol biosynthetic process"/>
    <property type="evidence" value="ECO:0007669"/>
    <property type="project" value="UniProtKB-UniRule"/>
</dbReference>
<dbReference type="GO" id="GO:0006631">
    <property type="term" value="P:fatty acid metabolic process"/>
    <property type="evidence" value="ECO:0007669"/>
    <property type="project" value="TreeGrafter"/>
</dbReference>
<dbReference type="CDD" id="cd07993">
    <property type="entry name" value="LPLAT_DHAPAT-like"/>
    <property type="match status" value="1"/>
</dbReference>
<dbReference type="HAMAP" id="MF_00393">
    <property type="entry name" value="Glyc3P_acyltrans"/>
    <property type="match status" value="1"/>
</dbReference>
<dbReference type="InterPro" id="IPR022284">
    <property type="entry name" value="GPAT/DHAPAT"/>
</dbReference>
<dbReference type="InterPro" id="IPR045520">
    <property type="entry name" value="GPAT/DHAPAT_C"/>
</dbReference>
<dbReference type="InterPro" id="IPR041728">
    <property type="entry name" value="GPAT/DHAPAT_LPLAT"/>
</dbReference>
<dbReference type="InterPro" id="IPR028354">
    <property type="entry name" value="GPAT_PlsB"/>
</dbReference>
<dbReference type="InterPro" id="IPR002123">
    <property type="entry name" value="Plipid/glycerol_acylTrfase"/>
</dbReference>
<dbReference type="NCBIfam" id="TIGR03703">
    <property type="entry name" value="plsB"/>
    <property type="match status" value="1"/>
</dbReference>
<dbReference type="NCBIfam" id="NF003441">
    <property type="entry name" value="PRK04974.1"/>
    <property type="match status" value="1"/>
</dbReference>
<dbReference type="PANTHER" id="PTHR12563:SF17">
    <property type="entry name" value="DIHYDROXYACETONE PHOSPHATE ACYLTRANSFERASE"/>
    <property type="match status" value="1"/>
</dbReference>
<dbReference type="PANTHER" id="PTHR12563">
    <property type="entry name" value="GLYCEROL-3-PHOSPHATE ACYLTRANSFERASE"/>
    <property type="match status" value="1"/>
</dbReference>
<dbReference type="Pfam" id="PF01553">
    <property type="entry name" value="Acyltransferase"/>
    <property type="match status" value="1"/>
</dbReference>
<dbReference type="Pfam" id="PF19277">
    <property type="entry name" value="GPAT_C"/>
    <property type="match status" value="1"/>
</dbReference>
<dbReference type="PIRSF" id="PIRSF500064">
    <property type="entry name" value="GPAT"/>
    <property type="match status" value="1"/>
</dbReference>
<dbReference type="PIRSF" id="PIRSF000437">
    <property type="entry name" value="GPAT_DHAPAT"/>
    <property type="match status" value="1"/>
</dbReference>
<dbReference type="SMART" id="SM00563">
    <property type="entry name" value="PlsC"/>
    <property type="match status" value="1"/>
</dbReference>
<dbReference type="SUPFAM" id="SSF69593">
    <property type="entry name" value="Glycerol-3-phosphate (1)-acyltransferase"/>
    <property type="match status" value="1"/>
</dbReference>
<gene>
    <name evidence="1" type="primary">plsB</name>
    <name type="ordered locus">ECIAI1_4271</name>
</gene>
<proteinExistence type="inferred from homology"/>
<sequence length="807" mass="91381">MSGWPRIYYKLLNLPLSILVKSKSIPADPAPELGLDTSRPIMYVLPYNSKADLLTLRAQCLAHDLPDPLEPLEIDGTLLPRYVFIHGGPRVFTYYTPKEESIKLFHDYLDLHRSNPNLDVQMVPVSVMFGRAPGREKGEVNPPLRMLNGVQKFFAVLWLGRDSFVRFSPSVSLRRMADEHGTDKTIAQKLARVARMHFARQRLAAVGPRLPARQDLFNKLLASRAIAKAVEDEARSKKISHEKAQQNAIALMEEIAANFSYEMIRLTDRILGFTWNRLYQGINVHNAERVRQLAHDGHELVYVPCHRSHMDYLLLSYVLYHQGLVPPHIAAGINLNFWPAGPIFRRLGAFFIRRTFKGNKLYSTVFREYLGELFSRGYSVEYFVEGGRSRTGRLLDPKTGTLSMTIQAMLRGGTRPITLIPIYIGYEHVMEVGTYAKELRGATKEKESLPQMLRGLSKLRNLGQGYVNFGEPMPLMTYLNQHVPDWRESIDPIEAVRPAWLTPTVNNIAADLMVRINNAGAANAMNLCCTALLASRQRSLTREQLTEQLNCYLDLMRNVPYSTDSTVPSASASELIDHALQMNKFEVEKDTIGDIIILPREQAVLMTYYRNNIAHMLVLPSLMAAIVTQHRHISRDVLMEHVNVLYPMLKAELFLRWDRDELPDVIDALANEMQRQGLITLQDDELHINPAHSRTLQLLAAGARETLQRYAITFWLLSANPSINRGTLEKESRTVAQRLSVLHGINAPEFFDKAVFSSLVLTLRDEGYISDSGDAEPAETMKVYQLLAELITSDVRLTIESATQGEG</sequence>
<keyword id="KW-0012">Acyltransferase</keyword>
<keyword id="KW-0997">Cell inner membrane</keyword>
<keyword id="KW-1003">Cell membrane</keyword>
<keyword id="KW-0444">Lipid biosynthesis</keyword>
<keyword id="KW-0443">Lipid metabolism</keyword>
<keyword id="KW-0472">Membrane</keyword>
<keyword id="KW-0594">Phospholipid biosynthesis</keyword>
<keyword id="KW-1208">Phospholipid metabolism</keyword>
<keyword id="KW-0808">Transferase</keyword>
<evidence type="ECO:0000255" key="1">
    <source>
        <dbReference type="HAMAP-Rule" id="MF_00393"/>
    </source>
</evidence>
<reference key="1">
    <citation type="journal article" date="2009" name="PLoS Genet.">
        <title>Organised genome dynamics in the Escherichia coli species results in highly diverse adaptive paths.</title>
        <authorList>
            <person name="Touchon M."/>
            <person name="Hoede C."/>
            <person name="Tenaillon O."/>
            <person name="Barbe V."/>
            <person name="Baeriswyl S."/>
            <person name="Bidet P."/>
            <person name="Bingen E."/>
            <person name="Bonacorsi S."/>
            <person name="Bouchier C."/>
            <person name="Bouvet O."/>
            <person name="Calteau A."/>
            <person name="Chiapello H."/>
            <person name="Clermont O."/>
            <person name="Cruveiller S."/>
            <person name="Danchin A."/>
            <person name="Diard M."/>
            <person name="Dossat C."/>
            <person name="Karoui M.E."/>
            <person name="Frapy E."/>
            <person name="Garry L."/>
            <person name="Ghigo J.M."/>
            <person name="Gilles A.M."/>
            <person name="Johnson J."/>
            <person name="Le Bouguenec C."/>
            <person name="Lescat M."/>
            <person name="Mangenot S."/>
            <person name="Martinez-Jehanne V."/>
            <person name="Matic I."/>
            <person name="Nassif X."/>
            <person name="Oztas S."/>
            <person name="Petit M.A."/>
            <person name="Pichon C."/>
            <person name="Rouy Z."/>
            <person name="Ruf C.S."/>
            <person name="Schneider D."/>
            <person name="Tourret J."/>
            <person name="Vacherie B."/>
            <person name="Vallenet D."/>
            <person name="Medigue C."/>
            <person name="Rocha E.P.C."/>
            <person name="Denamur E."/>
        </authorList>
    </citation>
    <scope>NUCLEOTIDE SEQUENCE [LARGE SCALE GENOMIC DNA]</scope>
    <source>
        <strain>IAI1</strain>
    </source>
</reference>
<accession>B7M7V4</accession>
<protein>
    <recommendedName>
        <fullName evidence="1">Glycerol-3-phosphate acyltransferase</fullName>
        <shortName evidence="1">GPAT</shortName>
        <ecNumber evidence="1">2.3.1.15</ecNumber>
    </recommendedName>
</protein>